<geneLocation type="non-photosynthetic plastid"/>
<organism>
    <name type="scientific">Lathraea clandestina</name>
    <name type="common">Purple toothwort</name>
    <dbReference type="NCBI Taxonomy" id="41911"/>
    <lineage>
        <taxon>Eukaryota</taxon>
        <taxon>Viridiplantae</taxon>
        <taxon>Streptophyta</taxon>
        <taxon>Embryophyta</taxon>
        <taxon>Tracheophyta</taxon>
        <taxon>Spermatophyta</taxon>
        <taxon>Magnoliopsida</taxon>
        <taxon>eudicotyledons</taxon>
        <taxon>Gunneridae</taxon>
        <taxon>Pentapetalae</taxon>
        <taxon>asterids</taxon>
        <taxon>lamiids</taxon>
        <taxon>Lamiales</taxon>
        <taxon>Orobanchaceae</taxon>
        <taxon>Rhinantheae</taxon>
        <taxon>Lathraea</taxon>
    </lineage>
</organism>
<name>RK20_LATCL</name>
<comment type="function">
    <text evidence="1">Binds directly to 23S ribosomal RNA and is necessary for the in vitro assembly process of the 50S ribosomal subunit. It is not involved in the protein synthesizing functions of that subunit (By similarity).</text>
</comment>
<comment type="subcellular location">
    <subcellularLocation>
        <location>Plastid</location>
    </subcellularLocation>
</comment>
<comment type="similarity">
    <text evidence="2">Belongs to the bacterial ribosomal protein bL20 family.</text>
</comment>
<keyword id="KW-0934">Plastid</keyword>
<keyword id="KW-0687">Ribonucleoprotein</keyword>
<keyword id="KW-0689">Ribosomal protein</keyword>
<keyword id="KW-0694">RNA-binding</keyword>
<keyword id="KW-0699">rRNA-binding</keyword>
<protein>
    <recommendedName>
        <fullName evidence="2">Large ribosomal subunit protein bL20c</fullName>
    </recommendedName>
    <alternativeName>
        <fullName>50S ribosomal protein L20, plastid</fullName>
    </alternativeName>
</protein>
<dbReference type="EMBL" id="L44596">
    <property type="protein sequence ID" value="AAA75242.1"/>
    <property type="molecule type" value="Genomic_DNA"/>
</dbReference>
<dbReference type="SMR" id="P49162"/>
<dbReference type="GO" id="GO:0009536">
    <property type="term" value="C:plastid"/>
    <property type="evidence" value="ECO:0007669"/>
    <property type="project" value="UniProtKB-SubCell"/>
</dbReference>
<dbReference type="GO" id="GO:1990904">
    <property type="term" value="C:ribonucleoprotein complex"/>
    <property type="evidence" value="ECO:0007669"/>
    <property type="project" value="UniProtKB-KW"/>
</dbReference>
<dbReference type="GO" id="GO:0005840">
    <property type="term" value="C:ribosome"/>
    <property type="evidence" value="ECO:0007669"/>
    <property type="project" value="UniProtKB-KW"/>
</dbReference>
<dbReference type="GO" id="GO:0019843">
    <property type="term" value="F:rRNA binding"/>
    <property type="evidence" value="ECO:0007669"/>
    <property type="project" value="UniProtKB-KW"/>
</dbReference>
<dbReference type="GO" id="GO:0003735">
    <property type="term" value="F:structural constituent of ribosome"/>
    <property type="evidence" value="ECO:0007669"/>
    <property type="project" value="InterPro"/>
</dbReference>
<dbReference type="GO" id="GO:0006412">
    <property type="term" value="P:translation"/>
    <property type="evidence" value="ECO:0007669"/>
    <property type="project" value="InterPro"/>
</dbReference>
<dbReference type="CDD" id="cd07026">
    <property type="entry name" value="Ribosomal_L20"/>
    <property type="match status" value="1"/>
</dbReference>
<dbReference type="FunFam" id="1.10.1900.20:FF:000001">
    <property type="entry name" value="50S ribosomal protein L20"/>
    <property type="match status" value="1"/>
</dbReference>
<dbReference type="Gene3D" id="6.10.160.10">
    <property type="match status" value="1"/>
</dbReference>
<dbReference type="Gene3D" id="1.10.1900.20">
    <property type="entry name" value="Ribosomal protein L20"/>
    <property type="match status" value="1"/>
</dbReference>
<dbReference type="HAMAP" id="MF_00382">
    <property type="entry name" value="Ribosomal_bL20"/>
    <property type="match status" value="1"/>
</dbReference>
<dbReference type="InterPro" id="IPR005813">
    <property type="entry name" value="Ribosomal_bL20"/>
</dbReference>
<dbReference type="InterPro" id="IPR049946">
    <property type="entry name" value="RIBOSOMAL_L20_CS"/>
</dbReference>
<dbReference type="InterPro" id="IPR035566">
    <property type="entry name" value="Ribosomal_protein_bL20_C"/>
</dbReference>
<dbReference type="NCBIfam" id="TIGR01032">
    <property type="entry name" value="rplT_bact"/>
    <property type="match status" value="1"/>
</dbReference>
<dbReference type="PANTHER" id="PTHR10986">
    <property type="entry name" value="39S RIBOSOMAL PROTEIN L20"/>
    <property type="match status" value="1"/>
</dbReference>
<dbReference type="Pfam" id="PF00453">
    <property type="entry name" value="Ribosomal_L20"/>
    <property type="match status" value="1"/>
</dbReference>
<dbReference type="PRINTS" id="PR00062">
    <property type="entry name" value="RIBOSOMALL20"/>
</dbReference>
<dbReference type="SUPFAM" id="SSF74731">
    <property type="entry name" value="Ribosomal protein L20"/>
    <property type="match status" value="1"/>
</dbReference>
<dbReference type="PROSITE" id="PS00937">
    <property type="entry name" value="RIBOSOMAL_L20"/>
    <property type="match status" value="1"/>
</dbReference>
<proteinExistence type="inferred from homology"/>
<reference key="1">
    <citation type="journal article" date="1995" name="C. R. Acad. Sci. III, Sci. Vie">
        <title>The plastid rpl20 gene from Lathraea clandestina L. (holoparasite) is conserved in a functional form.</title>
        <authorList>
            <person name="Lusson N.A."/>
            <person name="Delavault P."/>
            <person name="Thalouarn P."/>
        </authorList>
    </citation>
    <scope>NUCLEOTIDE SEQUENCE [GENOMIC DNA]</scope>
</reference>
<accession>P49162</accession>
<sequence length="128" mass="15439">MTRIKRGYIARRRRTKMRLFASSFRGAHSRLTRTITQQKIRALFSAHRDRDKQKINFRRLWIARINAVIRKRGVSYSYSKLIHDLYKRQLLLNRKILAQIAISNRNCLYMISNEIIKETERKEYTGII</sequence>
<gene>
    <name type="primary">rpl20</name>
</gene>
<feature type="initiator methionine" description="Removed" evidence="1">
    <location>
        <position position="1"/>
    </location>
</feature>
<feature type="chain" id="PRO_0000177291" description="Large ribosomal subunit protein bL20c">
    <location>
        <begin position="2"/>
        <end position="128"/>
    </location>
</feature>
<evidence type="ECO:0000250" key="1"/>
<evidence type="ECO:0000305" key="2"/>